<dbReference type="EC" id="6.3.4.2" evidence="1"/>
<dbReference type="EMBL" id="AE017226">
    <property type="protein sequence ID" value="AAS13209.1"/>
    <property type="molecule type" value="Genomic_DNA"/>
</dbReference>
<dbReference type="RefSeq" id="NP_973290.1">
    <property type="nucleotide sequence ID" value="NC_002967.9"/>
</dbReference>
<dbReference type="RefSeq" id="WP_002667101.1">
    <property type="nucleotide sequence ID" value="NC_002967.9"/>
</dbReference>
<dbReference type="SMR" id="Q73J84"/>
<dbReference type="STRING" id="243275.TDE_2692"/>
<dbReference type="PaxDb" id="243275-TDE_2692"/>
<dbReference type="GeneID" id="2739279"/>
<dbReference type="KEGG" id="tde:TDE_2692"/>
<dbReference type="PATRIC" id="fig|243275.7.peg.2542"/>
<dbReference type="eggNOG" id="COG0504">
    <property type="taxonomic scope" value="Bacteria"/>
</dbReference>
<dbReference type="HOGENOM" id="CLU_011675_5_0_12"/>
<dbReference type="OrthoDB" id="9801107at2"/>
<dbReference type="UniPathway" id="UPA00159">
    <property type="reaction ID" value="UER00277"/>
</dbReference>
<dbReference type="Proteomes" id="UP000008212">
    <property type="component" value="Chromosome"/>
</dbReference>
<dbReference type="GO" id="GO:0005829">
    <property type="term" value="C:cytosol"/>
    <property type="evidence" value="ECO:0007669"/>
    <property type="project" value="TreeGrafter"/>
</dbReference>
<dbReference type="GO" id="GO:0005524">
    <property type="term" value="F:ATP binding"/>
    <property type="evidence" value="ECO:0007669"/>
    <property type="project" value="UniProtKB-KW"/>
</dbReference>
<dbReference type="GO" id="GO:0003883">
    <property type="term" value="F:CTP synthase activity"/>
    <property type="evidence" value="ECO:0007669"/>
    <property type="project" value="UniProtKB-UniRule"/>
</dbReference>
<dbReference type="GO" id="GO:0004359">
    <property type="term" value="F:glutaminase activity"/>
    <property type="evidence" value="ECO:0007669"/>
    <property type="project" value="RHEA"/>
</dbReference>
<dbReference type="GO" id="GO:0042802">
    <property type="term" value="F:identical protein binding"/>
    <property type="evidence" value="ECO:0007669"/>
    <property type="project" value="TreeGrafter"/>
</dbReference>
<dbReference type="GO" id="GO:0046872">
    <property type="term" value="F:metal ion binding"/>
    <property type="evidence" value="ECO:0007669"/>
    <property type="project" value="UniProtKB-KW"/>
</dbReference>
<dbReference type="GO" id="GO:0044210">
    <property type="term" value="P:'de novo' CTP biosynthetic process"/>
    <property type="evidence" value="ECO:0007669"/>
    <property type="project" value="UniProtKB-UniRule"/>
</dbReference>
<dbReference type="GO" id="GO:0019856">
    <property type="term" value="P:pyrimidine nucleobase biosynthetic process"/>
    <property type="evidence" value="ECO:0007669"/>
    <property type="project" value="TreeGrafter"/>
</dbReference>
<dbReference type="CDD" id="cd03113">
    <property type="entry name" value="CTPS_N"/>
    <property type="match status" value="1"/>
</dbReference>
<dbReference type="CDD" id="cd01746">
    <property type="entry name" value="GATase1_CTP_Synthase"/>
    <property type="match status" value="1"/>
</dbReference>
<dbReference type="FunFam" id="3.40.50.300:FF:000009">
    <property type="entry name" value="CTP synthase"/>
    <property type="match status" value="1"/>
</dbReference>
<dbReference type="FunFam" id="3.40.50.880:FF:000002">
    <property type="entry name" value="CTP synthase"/>
    <property type="match status" value="1"/>
</dbReference>
<dbReference type="Gene3D" id="3.40.50.880">
    <property type="match status" value="1"/>
</dbReference>
<dbReference type="Gene3D" id="3.40.50.300">
    <property type="entry name" value="P-loop containing nucleotide triphosphate hydrolases"/>
    <property type="match status" value="1"/>
</dbReference>
<dbReference type="HAMAP" id="MF_01227">
    <property type="entry name" value="PyrG"/>
    <property type="match status" value="1"/>
</dbReference>
<dbReference type="InterPro" id="IPR029062">
    <property type="entry name" value="Class_I_gatase-like"/>
</dbReference>
<dbReference type="InterPro" id="IPR004468">
    <property type="entry name" value="CTP_synthase"/>
</dbReference>
<dbReference type="InterPro" id="IPR017456">
    <property type="entry name" value="CTP_synthase_N"/>
</dbReference>
<dbReference type="InterPro" id="IPR017926">
    <property type="entry name" value="GATASE"/>
</dbReference>
<dbReference type="InterPro" id="IPR033828">
    <property type="entry name" value="GATase1_CTP_Synthase"/>
</dbReference>
<dbReference type="InterPro" id="IPR027417">
    <property type="entry name" value="P-loop_NTPase"/>
</dbReference>
<dbReference type="NCBIfam" id="NF003792">
    <property type="entry name" value="PRK05380.1"/>
    <property type="match status" value="1"/>
</dbReference>
<dbReference type="NCBIfam" id="TIGR00337">
    <property type="entry name" value="PyrG"/>
    <property type="match status" value="1"/>
</dbReference>
<dbReference type="PANTHER" id="PTHR11550">
    <property type="entry name" value="CTP SYNTHASE"/>
    <property type="match status" value="1"/>
</dbReference>
<dbReference type="PANTHER" id="PTHR11550:SF0">
    <property type="entry name" value="CTP SYNTHASE-RELATED"/>
    <property type="match status" value="1"/>
</dbReference>
<dbReference type="Pfam" id="PF06418">
    <property type="entry name" value="CTP_synth_N"/>
    <property type="match status" value="1"/>
</dbReference>
<dbReference type="Pfam" id="PF00117">
    <property type="entry name" value="GATase"/>
    <property type="match status" value="1"/>
</dbReference>
<dbReference type="SUPFAM" id="SSF52317">
    <property type="entry name" value="Class I glutamine amidotransferase-like"/>
    <property type="match status" value="1"/>
</dbReference>
<dbReference type="SUPFAM" id="SSF52540">
    <property type="entry name" value="P-loop containing nucleoside triphosphate hydrolases"/>
    <property type="match status" value="1"/>
</dbReference>
<dbReference type="PROSITE" id="PS51273">
    <property type="entry name" value="GATASE_TYPE_1"/>
    <property type="match status" value="1"/>
</dbReference>
<comment type="function">
    <text evidence="1">Catalyzes the ATP-dependent amination of UTP to CTP with either L-glutamine or ammonia as the source of nitrogen. Regulates intracellular CTP levels through interactions with the four ribonucleotide triphosphates.</text>
</comment>
<comment type="catalytic activity">
    <reaction evidence="1">
        <text>UTP + L-glutamine + ATP + H2O = CTP + L-glutamate + ADP + phosphate + 2 H(+)</text>
        <dbReference type="Rhea" id="RHEA:26426"/>
        <dbReference type="ChEBI" id="CHEBI:15377"/>
        <dbReference type="ChEBI" id="CHEBI:15378"/>
        <dbReference type="ChEBI" id="CHEBI:29985"/>
        <dbReference type="ChEBI" id="CHEBI:30616"/>
        <dbReference type="ChEBI" id="CHEBI:37563"/>
        <dbReference type="ChEBI" id="CHEBI:43474"/>
        <dbReference type="ChEBI" id="CHEBI:46398"/>
        <dbReference type="ChEBI" id="CHEBI:58359"/>
        <dbReference type="ChEBI" id="CHEBI:456216"/>
        <dbReference type="EC" id="6.3.4.2"/>
    </reaction>
</comment>
<comment type="catalytic activity">
    <reaction evidence="1">
        <text>L-glutamine + H2O = L-glutamate + NH4(+)</text>
        <dbReference type="Rhea" id="RHEA:15889"/>
        <dbReference type="ChEBI" id="CHEBI:15377"/>
        <dbReference type="ChEBI" id="CHEBI:28938"/>
        <dbReference type="ChEBI" id="CHEBI:29985"/>
        <dbReference type="ChEBI" id="CHEBI:58359"/>
    </reaction>
</comment>
<comment type="catalytic activity">
    <reaction evidence="1">
        <text>UTP + NH4(+) + ATP = CTP + ADP + phosphate + 2 H(+)</text>
        <dbReference type="Rhea" id="RHEA:16597"/>
        <dbReference type="ChEBI" id="CHEBI:15378"/>
        <dbReference type="ChEBI" id="CHEBI:28938"/>
        <dbReference type="ChEBI" id="CHEBI:30616"/>
        <dbReference type="ChEBI" id="CHEBI:37563"/>
        <dbReference type="ChEBI" id="CHEBI:43474"/>
        <dbReference type="ChEBI" id="CHEBI:46398"/>
        <dbReference type="ChEBI" id="CHEBI:456216"/>
    </reaction>
</comment>
<comment type="activity regulation">
    <text evidence="1">Allosterically activated by GTP, when glutamine is the substrate; GTP has no effect on the reaction when ammonia is the substrate. The allosteric effector GTP functions by stabilizing the protein conformation that binds the tetrahedral intermediate(s) formed during glutamine hydrolysis. Inhibited by the product CTP, via allosteric rather than competitive inhibition.</text>
</comment>
<comment type="pathway">
    <text evidence="1">Pyrimidine metabolism; CTP biosynthesis via de novo pathway; CTP from UDP: step 2/2.</text>
</comment>
<comment type="subunit">
    <text evidence="1">Homotetramer.</text>
</comment>
<comment type="miscellaneous">
    <text evidence="1">CTPSs have evolved a hybrid strategy for distinguishing between UTP and CTP. The overlapping regions of the product feedback inhibitory and substrate sites recognize a common feature in both compounds, the triphosphate moiety. To differentiate isosteric substrate and product pyrimidine rings, an additional pocket far from the expected kinase/ligase catalytic site, specifically recognizes the cytosine and ribose portions of the product inhibitor.</text>
</comment>
<comment type="similarity">
    <text evidence="1">Belongs to the CTP synthase family.</text>
</comment>
<protein>
    <recommendedName>
        <fullName evidence="1">CTP synthase</fullName>
        <ecNumber evidence="1">6.3.4.2</ecNumber>
    </recommendedName>
    <alternativeName>
        <fullName evidence="1">Cytidine 5'-triphosphate synthase</fullName>
    </alternativeName>
    <alternativeName>
        <fullName evidence="1">Cytidine triphosphate synthetase</fullName>
        <shortName evidence="1">CTP synthetase</shortName>
        <shortName evidence="1">CTPS</shortName>
    </alternativeName>
    <alternativeName>
        <fullName evidence="1">UTP--ammonia ligase</fullName>
    </alternativeName>
</protein>
<accession>Q73J84</accession>
<evidence type="ECO:0000255" key="1">
    <source>
        <dbReference type="HAMAP-Rule" id="MF_01227"/>
    </source>
</evidence>
<organism>
    <name type="scientific">Treponema denticola (strain ATCC 35405 / DSM 14222 / CIP 103919 / JCM 8153 / KCTC 15104)</name>
    <dbReference type="NCBI Taxonomy" id="243275"/>
    <lineage>
        <taxon>Bacteria</taxon>
        <taxon>Pseudomonadati</taxon>
        <taxon>Spirochaetota</taxon>
        <taxon>Spirochaetia</taxon>
        <taxon>Spirochaetales</taxon>
        <taxon>Treponemataceae</taxon>
        <taxon>Treponema</taxon>
    </lineage>
</organism>
<reference key="1">
    <citation type="journal article" date="2004" name="Proc. Natl. Acad. Sci. U.S.A.">
        <title>Comparison of the genome of the oral pathogen Treponema denticola with other spirochete genomes.</title>
        <authorList>
            <person name="Seshadri R."/>
            <person name="Myers G.S.A."/>
            <person name="Tettelin H."/>
            <person name="Eisen J.A."/>
            <person name="Heidelberg J.F."/>
            <person name="Dodson R.J."/>
            <person name="Davidsen T.M."/>
            <person name="DeBoy R.T."/>
            <person name="Fouts D.E."/>
            <person name="Haft D.H."/>
            <person name="Selengut J."/>
            <person name="Ren Q."/>
            <person name="Brinkac L.M."/>
            <person name="Madupu R."/>
            <person name="Kolonay J.F."/>
            <person name="Durkin S.A."/>
            <person name="Daugherty S.C."/>
            <person name="Shetty J."/>
            <person name="Shvartsbeyn A."/>
            <person name="Gebregeorgis E."/>
            <person name="Geer K."/>
            <person name="Tsegaye G."/>
            <person name="Malek J.A."/>
            <person name="Ayodeji B."/>
            <person name="Shatsman S."/>
            <person name="McLeod M.P."/>
            <person name="Smajs D."/>
            <person name="Howell J.K."/>
            <person name="Pal S."/>
            <person name="Amin A."/>
            <person name="Vashisth P."/>
            <person name="McNeill T.Z."/>
            <person name="Xiang Q."/>
            <person name="Sodergren E."/>
            <person name="Baca E."/>
            <person name="Weinstock G.M."/>
            <person name="Norris S.J."/>
            <person name="Fraser C.M."/>
            <person name="Paulsen I.T."/>
        </authorList>
    </citation>
    <scope>NUCLEOTIDE SEQUENCE [LARGE SCALE GENOMIC DNA]</scope>
    <source>
        <strain>ATCC 35405 / DSM 14222 / CIP 103919 / JCM 8153 / KCTC 15104</strain>
    </source>
</reference>
<proteinExistence type="inferred from homology"/>
<name>PYRG_TREDE</name>
<keyword id="KW-0067">ATP-binding</keyword>
<keyword id="KW-0315">Glutamine amidotransferase</keyword>
<keyword id="KW-0436">Ligase</keyword>
<keyword id="KW-0460">Magnesium</keyword>
<keyword id="KW-0479">Metal-binding</keyword>
<keyword id="KW-0547">Nucleotide-binding</keyword>
<keyword id="KW-0665">Pyrimidine biosynthesis</keyword>
<keyword id="KW-1185">Reference proteome</keyword>
<gene>
    <name evidence="1" type="primary">pyrG</name>
    <name type="ordered locus">TDE_2692</name>
</gene>
<sequence>MKSKFIFITGGVVSSLGKGLTAASIGMLLKSRGYSVVNQKFDPYLNVDPGTMNPYQHGEVFVTEDGGETDLDLGHYERFTDVPLHKFNSTSAGKVYLAILDRERAGGYNGGTVQVVPHVTDEIQSRILGTAEQTGADFVISEIGGTVGDIEALPFIEAIRQIRYTVGKENCMFVHLGLLPYLKECGEIKTKPMQHSVKELLSFGIQPDILICRSEKRLSKSTREKLSLFSNIPQDAIIENLTAKSIYEVPLMLEEAGLGKVLCKLFNIENKEPNLEEWKKMVQTYYNPEKEITIALVGKYVELPDAYLSVAEALTAAGIYHKTSIKLLWIDSKKIETKEDAAAFLKDADGIIVPGGFGDRGINGMLLTAQFARENKIPYFGICLGMQISAIEYALNALHIEEANSSEFDKNAKNPVIDLMPDQKDVKIGGTLRLGLYRCMIAEGSLAEKAYKSHEIQERHRHRYEFNNLYREKFDNSDMIFSGLNPERNLVEIVELKSHPWFVAVQFHPEFASRPNKPHPLFRDFIKAAVDNKINR</sequence>
<feature type="chain" id="PRO_0000266255" description="CTP synthase">
    <location>
        <begin position="1"/>
        <end position="536"/>
    </location>
</feature>
<feature type="domain" description="Glutamine amidotransferase type-1" evidence="1">
    <location>
        <begin position="293"/>
        <end position="535"/>
    </location>
</feature>
<feature type="region of interest" description="Amidoligase domain" evidence="1">
    <location>
        <begin position="1"/>
        <end position="268"/>
    </location>
</feature>
<feature type="active site" description="Nucleophile; for glutamine hydrolysis" evidence="1">
    <location>
        <position position="383"/>
    </location>
</feature>
<feature type="active site" evidence="1">
    <location>
        <position position="508"/>
    </location>
</feature>
<feature type="active site" evidence="1">
    <location>
        <position position="510"/>
    </location>
</feature>
<feature type="binding site" evidence="1">
    <location>
        <position position="14"/>
    </location>
    <ligand>
        <name>CTP</name>
        <dbReference type="ChEBI" id="CHEBI:37563"/>
        <note>allosteric inhibitor</note>
    </ligand>
</feature>
<feature type="binding site" evidence="1">
    <location>
        <position position="14"/>
    </location>
    <ligand>
        <name>UTP</name>
        <dbReference type="ChEBI" id="CHEBI:46398"/>
    </ligand>
</feature>
<feature type="binding site" evidence="1">
    <location>
        <begin position="15"/>
        <end position="20"/>
    </location>
    <ligand>
        <name>ATP</name>
        <dbReference type="ChEBI" id="CHEBI:30616"/>
    </ligand>
</feature>
<feature type="binding site" evidence="1">
    <location>
        <position position="55"/>
    </location>
    <ligand>
        <name>L-glutamine</name>
        <dbReference type="ChEBI" id="CHEBI:58359"/>
    </ligand>
</feature>
<feature type="binding site" evidence="1">
    <location>
        <position position="72"/>
    </location>
    <ligand>
        <name>ATP</name>
        <dbReference type="ChEBI" id="CHEBI:30616"/>
    </ligand>
</feature>
<feature type="binding site" evidence="1">
    <location>
        <position position="72"/>
    </location>
    <ligand>
        <name>Mg(2+)</name>
        <dbReference type="ChEBI" id="CHEBI:18420"/>
    </ligand>
</feature>
<feature type="binding site" evidence="1">
    <location>
        <position position="142"/>
    </location>
    <ligand>
        <name>Mg(2+)</name>
        <dbReference type="ChEBI" id="CHEBI:18420"/>
    </ligand>
</feature>
<feature type="binding site" evidence="1">
    <location>
        <begin position="149"/>
        <end position="151"/>
    </location>
    <ligand>
        <name>CTP</name>
        <dbReference type="ChEBI" id="CHEBI:37563"/>
        <note>allosteric inhibitor</note>
    </ligand>
</feature>
<feature type="binding site" evidence="1">
    <location>
        <begin position="189"/>
        <end position="194"/>
    </location>
    <ligand>
        <name>CTP</name>
        <dbReference type="ChEBI" id="CHEBI:37563"/>
        <note>allosteric inhibitor</note>
    </ligand>
</feature>
<feature type="binding site" evidence="1">
    <location>
        <begin position="189"/>
        <end position="194"/>
    </location>
    <ligand>
        <name>UTP</name>
        <dbReference type="ChEBI" id="CHEBI:46398"/>
    </ligand>
</feature>
<feature type="binding site" evidence="1">
    <location>
        <position position="225"/>
    </location>
    <ligand>
        <name>CTP</name>
        <dbReference type="ChEBI" id="CHEBI:37563"/>
        <note>allosteric inhibitor</note>
    </ligand>
</feature>
<feature type="binding site" evidence="1">
    <location>
        <position position="225"/>
    </location>
    <ligand>
        <name>UTP</name>
        <dbReference type="ChEBI" id="CHEBI:46398"/>
    </ligand>
</feature>
<feature type="binding site" evidence="1">
    <location>
        <position position="356"/>
    </location>
    <ligand>
        <name>L-glutamine</name>
        <dbReference type="ChEBI" id="CHEBI:58359"/>
    </ligand>
</feature>
<feature type="binding site" evidence="1">
    <location>
        <begin position="384"/>
        <end position="387"/>
    </location>
    <ligand>
        <name>L-glutamine</name>
        <dbReference type="ChEBI" id="CHEBI:58359"/>
    </ligand>
</feature>
<feature type="binding site" evidence="1">
    <location>
        <position position="407"/>
    </location>
    <ligand>
        <name>L-glutamine</name>
        <dbReference type="ChEBI" id="CHEBI:58359"/>
    </ligand>
</feature>
<feature type="binding site" evidence="1">
    <location>
        <position position="463"/>
    </location>
    <ligand>
        <name>L-glutamine</name>
        <dbReference type="ChEBI" id="CHEBI:58359"/>
    </ligand>
</feature>